<name>FB276_ARATH</name>
<reference key="1">
    <citation type="submission" date="1998-12" db="EMBL/GenBank/DDBJ databases">
        <title>Structural analysis of Arabidopsis thaliana chromosome 5. XI.</title>
        <authorList>
            <person name="Kaneko T."/>
            <person name="Katoh T."/>
            <person name="Asamizu E."/>
            <person name="Sato S."/>
            <person name="Nakamura Y."/>
            <person name="Kotani H."/>
            <person name="Tabata S."/>
        </authorList>
    </citation>
    <scope>NUCLEOTIDE SEQUENCE [LARGE SCALE GENOMIC DNA]</scope>
    <source>
        <strain>cv. Columbia</strain>
    </source>
</reference>
<reference key="2">
    <citation type="journal article" date="1997" name="DNA Res.">
        <title>Structural analysis of Arabidopsis thaliana chromosome 5. II. Sequence features of the regions of 1,044,062 bp covered by thirteen physically assigned P1 clones.</title>
        <authorList>
            <person name="Kotani H."/>
            <person name="Nakamura Y."/>
            <person name="Sato S."/>
            <person name="Kaneko T."/>
            <person name="Asamizu E."/>
            <person name="Miyajima N."/>
            <person name="Tabata S."/>
        </authorList>
    </citation>
    <scope>NUCLEOTIDE SEQUENCE [LARGE SCALE GENOMIC DNA]</scope>
    <source>
        <strain>cv. Columbia</strain>
    </source>
</reference>
<reference key="3">
    <citation type="journal article" date="2017" name="Plant J.">
        <title>Araport11: a complete reannotation of the Arabidopsis thaliana reference genome.</title>
        <authorList>
            <person name="Cheng C.Y."/>
            <person name="Krishnakumar V."/>
            <person name="Chan A.P."/>
            <person name="Thibaud-Nissen F."/>
            <person name="Schobel S."/>
            <person name="Town C.D."/>
        </authorList>
    </citation>
    <scope>GENOME REANNOTATION</scope>
    <source>
        <strain>cv. Columbia</strain>
    </source>
</reference>
<reference key="4">
    <citation type="submission" date="2005-05" db="EMBL/GenBank/DDBJ databases">
        <authorList>
            <person name="Underwood B.A."/>
            <person name="Xiao Y.-L."/>
            <person name="Moskal W.A. Jr."/>
            <person name="Monaghan E.L."/>
            <person name="Wang W."/>
            <person name="Redman J.C."/>
            <person name="Wu H.C."/>
            <person name="Utterback T."/>
            <person name="Town C.D."/>
        </authorList>
    </citation>
    <scope>NUCLEOTIDE SEQUENCE [LARGE SCALE MRNA]</scope>
    <source>
        <strain>cv. Columbia</strain>
    </source>
</reference>
<organism>
    <name type="scientific">Arabidopsis thaliana</name>
    <name type="common">Mouse-ear cress</name>
    <dbReference type="NCBI Taxonomy" id="3702"/>
    <lineage>
        <taxon>Eukaryota</taxon>
        <taxon>Viridiplantae</taxon>
        <taxon>Streptophyta</taxon>
        <taxon>Embryophyta</taxon>
        <taxon>Tracheophyta</taxon>
        <taxon>Spermatophyta</taxon>
        <taxon>Magnoliopsida</taxon>
        <taxon>eudicotyledons</taxon>
        <taxon>Gunneridae</taxon>
        <taxon>Pentapetalae</taxon>
        <taxon>rosids</taxon>
        <taxon>malvids</taxon>
        <taxon>Brassicales</taxon>
        <taxon>Brassicaceae</taxon>
        <taxon>Camelineae</taxon>
        <taxon>Arabidopsis</taxon>
    </lineage>
</organism>
<feature type="chain" id="PRO_0000283542" description="F-box protein At5g41490">
    <location>
        <begin position="1"/>
        <end position="387"/>
    </location>
</feature>
<feature type="domain" description="F-box">
    <location>
        <begin position="2"/>
        <end position="47"/>
    </location>
</feature>
<gene>
    <name type="ordered locus">At5g41490</name>
    <name type="ORF">MYC6.19</name>
</gene>
<sequence>MATMITNLRRDLIEEIISRVPLRSMKAVRLTCKSWNNISKSEIFTKMQIDKATTREGKTMMISVMPHNLSLMSVAVDDVDPSVEFKGQLSFLCNQVSIHKVIHCEGLLLCFLKDHTRVVVWNPYSGQTRWVKLRYPHPPSPSKWDWFRYALGYEDKGSCRSVKFLRFLDYLPEEPENQNVCYEIYDFDSDLWTTLDVTSHSWICYSSCGVFLKGNAYWPVVKSSSEANIDHIIYFDFTRESFGPPLPLPFGATDRGYSYVNLSCVKEEKLAAFFQHYISYKYEFEIWVTTKIEAEMVSWSKFLRMDLGPNIDIPITFFIDEEKKVFMGFEHREYPKRFINIIGEAKYLRKLDLQVPQGQYCCPPLCSYVPSSIQIKKPALRQKDRAK</sequence>
<protein>
    <recommendedName>
        <fullName>F-box protein At5g41490</fullName>
    </recommendedName>
</protein>
<keyword id="KW-1185">Reference proteome</keyword>
<dbReference type="EMBL" id="AB020748">
    <property type="protein sequence ID" value="BAB10110.1"/>
    <property type="molecule type" value="Genomic_DNA"/>
</dbReference>
<dbReference type="EMBL" id="AB006707">
    <property type="protein sequence ID" value="BAB10110.1"/>
    <property type="status" value="JOINED"/>
    <property type="molecule type" value="Genomic_DNA"/>
</dbReference>
<dbReference type="EMBL" id="CP002688">
    <property type="protein sequence ID" value="AED94684.1"/>
    <property type="molecule type" value="Genomic_DNA"/>
</dbReference>
<dbReference type="EMBL" id="DQ056703">
    <property type="protein sequence ID" value="AAY78849.1"/>
    <property type="molecule type" value="mRNA"/>
</dbReference>
<dbReference type="RefSeq" id="NP_198964.1">
    <property type="nucleotide sequence ID" value="NM_123513.1"/>
</dbReference>
<dbReference type="BioGRID" id="19401">
    <property type="interactions" value="4"/>
</dbReference>
<dbReference type="STRING" id="3702.Q9FH73"/>
<dbReference type="PaxDb" id="3702-AT5G41490.1"/>
<dbReference type="EnsemblPlants" id="AT5G41490.1">
    <property type="protein sequence ID" value="AT5G41490.1"/>
    <property type="gene ID" value="AT5G41490"/>
</dbReference>
<dbReference type="GeneID" id="834150"/>
<dbReference type="Gramene" id="AT5G41490.1">
    <property type="protein sequence ID" value="AT5G41490.1"/>
    <property type="gene ID" value="AT5G41490"/>
</dbReference>
<dbReference type="KEGG" id="ath:AT5G41490"/>
<dbReference type="Araport" id="AT5G41490"/>
<dbReference type="TAIR" id="AT5G41490"/>
<dbReference type="HOGENOM" id="CLU_034692_0_0_1"/>
<dbReference type="InParanoid" id="Q9FH73"/>
<dbReference type="OMA" id="FEIWITA"/>
<dbReference type="PhylomeDB" id="Q9FH73"/>
<dbReference type="PRO" id="PR:Q9FH73"/>
<dbReference type="Proteomes" id="UP000006548">
    <property type="component" value="Chromosome 5"/>
</dbReference>
<dbReference type="ExpressionAtlas" id="Q9FH73">
    <property type="expression patterns" value="baseline and differential"/>
</dbReference>
<dbReference type="InterPro" id="IPR006527">
    <property type="entry name" value="F-box-assoc_dom_typ1"/>
</dbReference>
<dbReference type="InterPro" id="IPR017451">
    <property type="entry name" value="F-box-assoc_interact_dom"/>
</dbReference>
<dbReference type="InterPro" id="IPR036047">
    <property type="entry name" value="F-box-like_dom_sf"/>
</dbReference>
<dbReference type="InterPro" id="IPR001810">
    <property type="entry name" value="F-box_dom"/>
</dbReference>
<dbReference type="InterPro" id="IPR050796">
    <property type="entry name" value="SCF_F-box_component"/>
</dbReference>
<dbReference type="NCBIfam" id="TIGR01640">
    <property type="entry name" value="F_box_assoc_1"/>
    <property type="match status" value="1"/>
</dbReference>
<dbReference type="PANTHER" id="PTHR31672">
    <property type="entry name" value="BNACNNG10540D PROTEIN"/>
    <property type="match status" value="1"/>
</dbReference>
<dbReference type="PANTHER" id="PTHR31672:SF13">
    <property type="entry name" value="F-BOX PROTEIN CPR30-LIKE"/>
    <property type="match status" value="1"/>
</dbReference>
<dbReference type="Pfam" id="PF00646">
    <property type="entry name" value="F-box"/>
    <property type="match status" value="1"/>
</dbReference>
<dbReference type="Pfam" id="PF07734">
    <property type="entry name" value="FBA_1"/>
    <property type="match status" value="1"/>
</dbReference>
<dbReference type="SMART" id="SM00256">
    <property type="entry name" value="FBOX"/>
    <property type="match status" value="1"/>
</dbReference>
<dbReference type="SUPFAM" id="SSF81383">
    <property type="entry name" value="F-box domain"/>
    <property type="match status" value="1"/>
</dbReference>
<accession>Q9FH73</accession>
<proteinExistence type="evidence at transcript level"/>